<dbReference type="EC" id="2.7.7.7"/>
<dbReference type="EMBL" id="AF020193">
    <property type="protein sequence ID" value="AAC18443.1"/>
    <property type="molecule type" value="mRNA"/>
</dbReference>
<dbReference type="PIR" id="T05731">
    <property type="entry name" value="T05731"/>
</dbReference>
<dbReference type="RefSeq" id="NP_001238693.1">
    <property type="nucleotide sequence ID" value="NM_001251764.1"/>
</dbReference>
<dbReference type="SMR" id="O48901"/>
<dbReference type="FunCoup" id="O48901">
    <property type="interactions" value="5604"/>
</dbReference>
<dbReference type="STRING" id="3847.O48901"/>
<dbReference type="PaxDb" id="3847-GLYMA04G38800.4"/>
<dbReference type="GeneID" id="548092"/>
<dbReference type="KEGG" id="gmx:548092"/>
<dbReference type="eggNOG" id="KOG0969">
    <property type="taxonomic scope" value="Eukaryota"/>
</dbReference>
<dbReference type="InParanoid" id="O48901"/>
<dbReference type="OrthoDB" id="2414538at2759"/>
<dbReference type="Proteomes" id="UP000008827">
    <property type="component" value="Unplaced"/>
</dbReference>
<dbReference type="GO" id="GO:0043625">
    <property type="term" value="C:delta DNA polymerase complex"/>
    <property type="evidence" value="ECO:0000318"/>
    <property type="project" value="GO_Central"/>
</dbReference>
<dbReference type="GO" id="GO:0008296">
    <property type="term" value="F:3'-5'-DNA exonuclease activity"/>
    <property type="evidence" value="ECO:0000318"/>
    <property type="project" value="GO_Central"/>
</dbReference>
<dbReference type="GO" id="GO:0003677">
    <property type="term" value="F:DNA binding"/>
    <property type="evidence" value="ECO:0007669"/>
    <property type="project" value="UniProtKB-KW"/>
</dbReference>
<dbReference type="GO" id="GO:0003887">
    <property type="term" value="F:DNA-directed DNA polymerase activity"/>
    <property type="evidence" value="ECO:0000318"/>
    <property type="project" value="GO_Central"/>
</dbReference>
<dbReference type="GO" id="GO:0046872">
    <property type="term" value="F:metal ion binding"/>
    <property type="evidence" value="ECO:0007669"/>
    <property type="project" value="UniProtKB-KW"/>
</dbReference>
<dbReference type="GO" id="GO:0000166">
    <property type="term" value="F:nucleotide binding"/>
    <property type="evidence" value="ECO:0007669"/>
    <property type="project" value="InterPro"/>
</dbReference>
<dbReference type="GO" id="GO:0006287">
    <property type="term" value="P:base-excision repair, gap-filling"/>
    <property type="evidence" value="ECO:0000318"/>
    <property type="project" value="GO_Central"/>
</dbReference>
<dbReference type="GO" id="GO:0045004">
    <property type="term" value="P:DNA replication proofreading"/>
    <property type="evidence" value="ECO:0000318"/>
    <property type="project" value="GO_Central"/>
</dbReference>
<dbReference type="GO" id="GO:0006261">
    <property type="term" value="P:DNA-templated DNA replication"/>
    <property type="evidence" value="ECO:0000318"/>
    <property type="project" value="GO_Central"/>
</dbReference>
<dbReference type="GO" id="GO:0006297">
    <property type="term" value="P:nucleotide-excision repair, DNA gap filling"/>
    <property type="evidence" value="ECO:0000318"/>
    <property type="project" value="GO_Central"/>
</dbReference>
<dbReference type="CDD" id="cd05777">
    <property type="entry name" value="DNA_polB_delta_exo"/>
    <property type="match status" value="1"/>
</dbReference>
<dbReference type="CDD" id="cd05533">
    <property type="entry name" value="POLBc_delta"/>
    <property type="match status" value="1"/>
</dbReference>
<dbReference type="FunFam" id="1.10.132.60:FF:000001">
    <property type="entry name" value="DNA polymerase"/>
    <property type="match status" value="1"/>
</dbReference>
<dbReference type="FunFam" id="1.10.287.690:FF:000001">
    <property type="entry name" value="DNA polymerase"/>
    <property type="match status" value="1"/>
</dbReference>
<dbReference type="FunFam" id="3.30.342.10:FF:000007">
    <property type="entry name" value="DNA polymerase"/>
    <property type="match status" value="1"/>
</dbReference>
<dbReference type="FunFam" id="3.30.420.10:FF:000351">
    <property type="entry name" value="DNA polymerase"/>
    <property type="match status" value="1"/>
</dbReference>
<dbReference type="Gene3D" id="1.10.132.60">
    <property type="entry name" value="DNA polymerase family B, C-terminal domain"/>
    <property type="match status" value="1"/>
</dbReference>
<dbReference type="Gene3D" id="3.30.342.10">
    <property type="entry name" value="DNA Polymerase, chain B, domain 1"/>
    <property type="match status" value="1"/>
</dbReference>
<dbReference type="Gene3D" id="1.10.287.690">
    <property type="entry name" value="Helix hairpin bin"/>
    <property type="match status" value="1"/>
</dbReference>
<dbReference type="Gene3D" id="3.90.1600.10">
    <property type="entry name" value="Palm domain of DNA polymerase"/>
    <property type="match status" value="1"/>
</dbReference>
<dbReference type="Gene3D" id="3.30.420.10">
    <property type="entry name" value="Ribonuclease H-like superfamily/Ribonuclease H"/>
    <property type="match status" value="1"/>
</dbReference>
<dbReference type="InterPro" id="IPR006172">
    <property type="entry name" value="DNA-dir_DNA_pol_B"/>
</dbReference>
<dbReference type="InterPro" id="IPR017964">
    <property type="entry name" value="DNA-dir_DNA_pol_B_CS"/>
</dbReference>
<dbReference type="InterPro" id="IPR006133">
    <property type="entry name" value="DNA-dir_DNA_pol_B_exonuc"/>
</dbReference>
<dbReference type="InterPro" id="IPR006134">
    <property type="entry name" value="DNA-dir_DNA_pol_B_multi_dom"/>
</dbReference>
<dbReference type="InterPro" id="IPR043502">
    <property type="entry name" value="DNA/RNA_pol_sf"/>
</dbReference>
<dbReference type="InterPro" id="IPR042087">
    <property type="entry name" value="DNA_pol_B_thumb"/>
</dbReference>
<dbReference type="InterPro" id="IPR023211">
    <property type="entry name" value="DNA_pol_palm_dom_sf"/>
</dbReference>
<dbReference type="InterPro" id="IPR050240">
    <property type="entry name" value="DNA_pol_type-B"/>
</dbReference>
<dbReference type="InterPro" id="IPR056435">
    <property type="entry name" value="DPOD/Z_N"/>
</dbReference>
<dbReference type="InterPro" id="IPR012337">
    <property type="entry name" value="RNaseH-like_sf"/>
</dbReference>
<dbReference type="InterPro" id="IPR036397">
    <property type="entry name" value="RNaseH_sf"/>
</dbReference>
<dbReference type="NCBIfam" id="TIGR00592">
    <property type="entry name" value="pol2"/>
    <property type="match status" value="1"/>
</dbReference>
<dbReference type="PANTHER" id="PTHR10322">
    <property type="entry name" value="DNA POLYMERASE CATALYTIC SUBUNIT"/>
    <property type="match status" value="1"/>
</dbReference>
<dbReference type="PANTHER" id="PTHR10322:SF23">
    <property type="entry name" value="DNA POLYMERASE DELTA CATALYTIC SUBUNIT"/>
    <property type="match status" value="1"/>
</dbReference>
<dbReference type="Pfam" id="PF00136">
    <property type="entry name" value="DNA_pol_B"/>
    <property type="match status" value="1"/>
</dbReference>
<dbReference type="Pfam" id="PF03104">
    <property type="entry name" value="DNA_pol_B_exo1"/>
    <property type="match status" value="1"/>
</dbReference>
<dbReference type="Pfam" id="PF24055">
    <property type="entry name" value="POL3_N"/>
    <property type="match status" value="1"/>
</dbReference>
<dbReference type="PRINTS" id="PR00106">
    <property type="entry name" value="DNAPOLB"/>
</dbReference>
<dbReference type="SMART" id="SM00486">
    <property type="entry name" value="POLBc"/>
    <property type="match status" value="1"/>
</dbReference>
<dbReference type="SUPFAM" id="SSF56672">
    <property type="entry name" value="DNA/RNA polymerases"/>
    <property type="match status" value="1"/>
</dbReference>
<dbReference type="SUPFAM" id="SSF53098">
    <property type="entry name" value="Ribonuclease H-like"/>
    <property type="match status" value="1"/>
</dbReference>
<dbReference type="PROSITE" id="PS00116">
    <property type="entry name" value="DNA_POLYMERASE_B"/>
    <property type="match status" value="1"/>
</dbReference>
<accession>O48901</accession>
<organism>
    <name type="scientific">Glycine max</name>
    <name type="common">Soybean</name>
    <name type="synonym">Glycine hispida</name>
    <dbReference type="NCBI Taxonomy" id="3847"/>
    <lineage>
        <taxon>Eukaryota</taxon>
        <taxon>Viridiplantae</taxon>
        <taxon>Streptophyta</taxon>
        <taxon>Embryophyta</taxon>
        <taxon>Tracheophyta</taxon>
        <taxon>Spermatophyta</taxon>
        <taxon>Magnoliopsida</taxon>
        <taxon>eudicotyledons</taxon>
        <taxon>Gunneridae</taxon>
        <taxon>Pentapetalae</taxon>
        <taxon>rosids</taxon>
        <taxon>fabids</taxon>
        <taxon>Fabales</taxon>
        <taxon>Fabaceae</taxon>
        <taxon>Papilionoideae</taxon>
        <taxon>50 kb inversion clade</taxon>
        <taxon>NPAAA clade</taxon>
        <taxon>indigoferoid/millettioid clade</taxon>
        <taxon>Phaseoleae</taxon>
        <taxon>Glycine</taxon>
        <taxon>Glycine subgen. Soja</taxon>
    </lineage>
</organism>
<gene>
    <name type="primary">POLD1</name>
</gene>
<reference key="1">
    <citation type="submission" date="1997-08" db="EMBL/GenBank/DDBJ databases">
        <authorList>
            <person name="Collins J.T.B."/>
            <person name="Cannon G.C."/>
            <person name="Heinhorst S."/>
        </authorList>
    </citation>
    <scope>NUCLEOTIDE SEQUENCE [MRNA]</scope>
    <source>
        <strain>cv. Corsoy</strain>
    </source>
</reference>
<name>DPOD1_SOYBN</name>
<feature type="chain" id="PRO_0000046451" description="DNA polymerase delta catalytic subunit">
    <location>
        <begin position="1"/>
        <end position="1088"/>
    </location>
</feature>
<keyword id="KW-0235">DNA replication</keyword>
<keyword id="KW-0238">DNA-binding</keyword>
<keyword id="KW-0239">DNA-directed DNA polymerase</keyword>
<keyword id="KW-0269">Exonuclease</keyword>
<keyword id="KW-0378">Hydrolase</keyword>
<keyword id="KW-0479">Metal-binding</keyword>
<keyword id="KW-0540">Nuclease</keyword>
<keyword id="KW-0548">Nucleotidyltransferase</keyword>
<keyword id="KW-0539">Nucleus</keyword>
<keyword id="KW-1185">Reference proteome</keyword>
<keyword id="KW-0808">Transferase</keyword>
<comment type="function">
    <text>This polymerase possesses two enzymatic activities: DNA synthesis (polymerase) and an exonucleolytic activity that degrades single-stranded DNA in the 3'- to 5'-direction.</text>
</comment>
<comment type="catalytic activity">
    <reaction>
        <text>DNA(n) + a 2'-deoxyribonucleoside 5'-triphosphate = DNA(n+1) + diphosphate</text>
        <dbReference type="Rhea" id="RHEA:22508"/>
        <dbReference type="Rhea" id="RHEA-COMP:17339"/>
        <dbReference type="Rhea" id="RHEA-COMP:17340"/>
        <dbReference type="ChEBI" id="CHEBI:33019"/>
        <dbReference type="ChEBI" id="CHEBI:61560"/>
        <dbReference type="ChEBI" id="CHEBI:173112"/>
        <dbReference type="EC" id="2.7.7.7"/>
    </reaction>
</comment>
<comment type="subunit">
    <text evidence="1">Heterodimer with subunits of 125 kDa and 50 kDa. The 125 kDa subunit contains the polymerase active site and most likely the active site for the 3'-5' exonuclease activity (By similarity).</text>
</comment>
<comment type="subcellular location">
    <subcellularLocation>
        <location>Nucleus</location>
    </subcellularLocation>
</comment>
<comment type="miscellaneous">
    <text>In eukaryotes there are five DNA polymerases: alpha, beta, gamma, delta, and epsilon which are responsible for different reactions of DNA synthesis.</text>
</comment>
<comment type="similarity">
    <text evidence="2">Belongs to the DNA polymerase type-B family.</text>
</comment>
<comment type="caution">
    <text evidence="2">In contrast to other DNA polymerase delta proteins, does not contain the Cys-rich regions at the C-terminus that coordinates zinc and 1 4Fe-4S iron-sulfur cluster.</text>
</comment>
<sequence>MTQEEEFMDEDVFINETLVSEDEESLILRDIEQRQALANRLSKWTRPPLSAGYVAQSRSVLFQQLEIDYVIAESHGELLPNSSGPVAIIRIFGVTKEGHSVCCNVHGFEPYFYICCPPGMGPDDISHFHQTLEGRMREANRNSNVGKFVRRIEMVQRRSIMYYQQSNSQPFLKIVVALPTMVASCRGILDRGIQLDGLGMKSFLTYESNVLFALRFMIDCNIVGGNWIGIPAGKYKKTAKSLSYCQLEFDCLYSELISHAPEGEYSKMAPFRILSFDIECAGRKGHFPEPTHDPVIQIANLVTLQGEDQPFIRNVMTLKSCSPIVGVDVMPFETEREVLLAWRDFIREVDPDIIIGYNICKFDLPYLIERALNLKIAEFPILGRIRNSRVRVKDTTFSSRQYGTRESKEVAVEGRVTFDLLQVMQRDYKLSSYSLNSVSSHFLSEQKEDVHHSIISDLQNGNAETRRRLAVYCLKDAYLPQRLLDKLMFIYNYVEMARVTGVPISFLLSRGQSIKVLSQLLRRARQKNLVIPNAKQAGSEQGTFEGATVLEARAGFYEKPIATLDFASLYPSIMMAYNLCYCTLVIPEDARKLNIPPESVNRTPSGETFVKSNLQKGILPEILEELLTARKRAKADLKEAKDPLEKAVLDGRQLALKISANSVYGFTGATIGQLPCLEISSSVTSYGRQMIEHTKKLVEDKFTTLNGYEHNAEVIYGDTDSVMVQFGVSAVEEAMNLGREAAEHISGTFTKPIKLEFEKVYYPYLLISKKRYAGLFWTKPDNFDKMDTKGIETVRRDNCLLVKNLVNDCLHKILIDRDIPGAVQYVKNAISDLLMNRMDLSLLVITKGLTKTGDDYEVKAAHVELAERMRKRDAATAPNVGDRVPYVIIKAAKGAKAYERSEDPIYVLENNIPIDPHYYLENQISKPILRIFEPILKNASKELLHGSHTRSISISTPSNSGILRFAKKQLPALVVKLYLARVITLSVHIAKEGRLSCTVKQYLKCLSWRCFLGGCGHSVRSAKVHFIRMFSAPVGIVQFSIDEKRHRKIWVKQSCNWTDGTSKFCQEFDLADLFEPMDTNTIWCLPQS</sequence>
<proteinExistence type="evidence at transcript level"/>
<protein>
    <recommendedName>
        <fullName>DNA polymerase delta catalytic subunit</fullName>
        <ecNumber>2.7.7.7</ecNumber>
    </recommendedName>
</protein>
<evidence type="ECO:0000250" key="1"/>
<evidence type="ECO:0000305" key="2"/>